<evidence type="ECO:0000250" key="1">
    <source>
        <dbReference type="UniProtKB" id="P09488"/>
    </source>
</evidence>
<evidence type="ECO:0000255" key="2">
    <source>
        <dbReference type="PROSITE-ProRule" id="PRU00684"/>
    </source>
</evidence>
<evidence type="ECO:0000269" key="3">
    <source>
    </source>
</evidence>
<evidence type="ECO:0000303" key="4">
    <source>
    </source>
</evidence>
<evidence type="ECO:0000305" key="5"/>
<evidence type="ECO:0000312" key="6">
    <source>
        <dbReference type="EMBL" id="AGG10560.1"/>
    </source>
</evidence>
<name>GSTM_TYRPU</name>
<organism evidence="6">
    <name type="scientific">Tyrophagus putrescentiae</name>
    <name type="common">Mold mite</name>
    <name type="synonym">Acarus putrescentiae</name>
    <dbReference type="NCBI Taxonomy" id="59818"/>
    <lineage>
        <taxon>Eukaryota</taxon>
        <taxon>Metazoa</taxon>
        <taxon>Ecdysozoa</taxon>
        <taxon>Arthropoda</taxon>
        <taxon>Chelicerata</taxon>
        <taxon>Arachnida</taxon>
        <taxon>Acari</taxon>
        <taxon>Acariformes</taxon>
        <taxon>Sarcoptiformes</taxon>
        <taxon>Astigmata</taxon>
        <taxon>Acaroidea</taxon>
        <taxon>Acaridae</taxon>
        <taxon>Tyrophaginae</taxon>
        <taxon>Tyrophagus</taxon>
    </lineage>
</organism>
<sequence>MSSKPVLGYWDIRGLAQPIRLLLAYLDVDYEDKRYQLGANFDRSAWLTEKFNLGLDFPNLPYYIDGNVKLSQTLAILRYIGRKYKLTGANEPEELRVSLVEQQVVDGNQSLSRVAYDPNADKLKPDFLKTLPDSVKQLSHFLGNSPFVAGTSITYVDFWLYEYLVKLSVLVPEVFGQFDNLKKFVERIESLPRVSVYIKAQQPKLFNGPMAKWNGQYA</sequence>
<accession>M1RIR6</accession>
<dbReference type="EC" id="2.5.1.18" evidence="3"/>
<dbReference type="EMBL" id="JX255733">
    <property type="protein sequence ID" value="AGG10560.1"/>
    <property type="molecule type" value="mRNA"/>
</dbReference>
<dbReference type="SMR" id="M1RIR6"/>
<dbReference type="Allergome" id="10807">
    <property type="allergen name" value="Tyr p 8"/>
</dbReference>
<dbReference type="Allergome" id="12338">
    <property type="allergen name" value="Tyr p 8.0101"/>
</dbReference>
<dbReference type="GO" id="GO:0043295">
    <property type="term" value="F:glutathione binding"/>
    <property type="evidence" value="ECO:0000250"/>
    <property type="project" value="UniProtKB"/>
</dbReference>
<dbReference type="GO" id="GO:0004364">
    <property type="term" value="F:glutathione transferase activity"/>
    <property type="evidence" value="ECO:0000314"/>
    <property type="project" value="UniProtKB"/>
</dbReference>
<dbReference type="GO" id="GO:0006749">
    <property type="term" value="P:glutathione metabolic process"/>
    <property type="evidence" value="ECO:0000314"/>
    <property type="project" value="UniProtKB"/>
</dbReference>
<dbReference type="CDD" id="cd03075">
    <property type="entry name" value="GST_N_Mu"/>
    <property type="match status" value="1"/>
</dbReference>
<dbReference type="FunFam" id="1.20.1050.10:FF:000003">
    <property type="entry name" value="Glutathione S-transferase 2"/>
    <property type="match status" value="1"/>
</dbReference>
<dbReference type="FunFam" id="3.40.30.10:FF:000019">
    <property type="entry name" value="Glutathione S-transferase Mu"/>
    <property type="match status" value="1"/>
</dbReference>
<dbReference type="Gene3D" id="1.20.1050.10">
    <property type="match status" value="1"/>
</dbReference>
<dbReference type="Gene3D" id="3.40.30.10">
    <property type="entry name" value="Glutaredoxin"/>
    <property type="match status" value="1"/>
</dbReference>
<dbReference type="InterPro" id="IPR010987">
    <property type="entry name" value="Glutathione-S-Trfase_C-like"/>
</dbReference>
<dbReference type="InterPro" id="IPR036282">
    <property type="entry name" value="Glutathione-S-Trfase_C_sf"/>
</dbReference>
<dbReference type="InterPro" id="IPR004045">
    <property type="entry name" value="Glutathione_S-Trfase_N"/>
</dbReference>
<dbReference type="InterPro" id="IPR004046">
    <property type="entry name" value="GST_C"/>
</dbReference>
<dbReference type="InterPro" id="IPR003081">
    <property type="entry name" value="GST_mu"/>
</dbReference>
<dbReference type="InterPro" id="IPR050213">
    <property type="entry name" value="GST_superfamily"/>
</dbReference>
<dbReference type="InterPro" id="IPR036249">
    <property type="entry name" value="Thioredoxin-like_sf"/>
</dbReference>
<dbReference type="PANTHER" id="PTHR11571">
    <property type="entry name" value="GLUTATHIONE S-TRANSFERASE"/>
    <property type="match status" value="1"/>
</dbReference>
<dbReference type="PANTHER" id="PTHR11571:SF222">
    <property type="entry name" value="GLUTATHIONE TRANSFERASE"/>
    <property type="match status" value="1"/>
</dbReference>
<dbReference type="Pfam" id="PF14497">
    <property type="entry name" value="GST_C_3"/>
    <property type="match status" value="1"/>
</dbReference>
<dbReference type="Pfam" id="PF02798">
    <property type="entry name" value="GST_N"/>
    <property type="match status" value="1"/>
</dbReference>
<dbReference type="PRINTS" id="PR01267">
    <property type="entry name" value="GSTRNSFRASEM"/>
</dbReference>
<dbReference type="SFLD" id="SFLDG01205">
    <property type="entry name" value="AMPS.1"/>
    <property type="match status" value="1"/>
</dbReference>
<dbReference type="SFLD" id="SFLDG00363">
    <property type="entry name" value="AMPS_(cytGST):_Alpha-__Mu-__Pi"/>
    <property type="match status" value="1"/>
</dbReference>
<dbReference type="SUPFAM" id="SSF47616">
    <property type="entry name" value="GST C-terminal domain-like"/>
    <property type="match status" value="1"/>
</dbReference>
<dbReference type="SUPFAM" id="SSF52833">
    <property type="entry name" value="Thioredoxin-like"/>
    <property type="match status" value="1"/>
</dbReference>
<dbReference type="PROSITE" id="PS50405">
    <property type="entry name" value="GST_CTER"/>
    <property type="match status" value="1"/>
</dbReference>
<dbReference type="PROSITE" id="PS50404">
    <property type="entry name" value="GST_NTER"/>
    <property type="match status" value="1"/>
</dbReference>
<proteinExistence type="evidence at protein level"/>
<comment type="function">
    <text evidence="1">Conjugation of reduced glutathione to a wide number of exogenous and endogenous hydrophobic electrophiles.</text>
</comment>
<comment type="catalytic activity">
    <reaction evidence="3">
        <text>RX + glutathione = an S-substituted glutathione + a halide anion + H(+)</text>
        <dbReference type="Rhea" id="RHEA:16437"/>
        <dbReference type="ChEBI" id="CHEBI:15378"/>
        <dbReference type="ChEBI" id="CHEBI:16042"/>
        <dbReference type="ChEBI" id="CHEBI:17792"/>
        <dbReference type="ChEBI" id="CHEBI:57925"/>
        <dbReference type="ChEBI" id="CHEBI:90779"/>
        <dbReference type="EC" id="2.5.1.18"/>
    </reaction>
</comment>
<comment type="allergen">
    <text evidence="3">Causes an allergic reaction in human. Binds to IgE in 45% of the 106 patients tested allergic to storage mite T.putrescentiae. The percentage decreases to about 18% when sera from these patients is first absorbed with D.pteronyssinus extract indicating high cross-reactivity between the corresponding allergens of the two mites. Induces histamine release from basophils.</text>
</comment>
<comment type="similarity">
    <text evidence="5">Belongs to the GST superfamily. Mu family.</text>
</comment>
<reference evidence="6" key="1">
    <citation type="journal article" date="2013" name="Clin. Vaccine Immunol.">
        <title>Identification of allergenic component Tyr p 8 from Tyrophagus putrescentiae and cross-reactivity with Der p 8.</title>
        <authorList>
            <person name="Liao E.-C."/>
            <person name="Lin Y.-H."/>
            <person name="Chiu C.-L."/>
            <person name="Lin T.-C."/>
            <person name="Tsai J.-J."/>
        </authorList>
    </citation>
    <scope>NUCLEOTIDE SEQUENCE [MRNA]</scope>
    <scope>PROTEIN SEQUENCE OF 2-17 AND 115-126</scope>
    <scope>IDENTIFICATION BY MASS SPECTROMETRY</scope>
    <scope>3D-STRUCTURE MODELING</scope>
    <scope>CATALYTIC ACTIVITY</scope>
    <scope>ALLERGEN</scope>
</reference>
<protein>
    <recommendedName>
        <fullName evidence="5">Glutathione S-transferase</fullName>
        <ecNumber evidence="3">2.5.1.18</ecNumber>
    </recommendedName>
    <alternativeName>
        <fullName evidence="5">GST class-mu</fullName>
    </alternativeName>
    <allergenName evidence="4">Tyr p 8</allergenName>
</protein>
<feature type="initiator methionine" description="Removed" evidence="3">
    <location>
        <position position="1"/>
    </location>
</feature>
<feature type="chain" id="PRO_0000447304" description="Glutathione S-transferase">
    <location>
        <begin position="2"/>
        <end position="218"/>
    </location>
</feature>
<feature type="domain" description="GST N-terminal" evidence="2">
    <location>
        <begin position="3"/>
        <end position="88"/>
    </location>
</feature>
<feature type="domain" description="GST C-terminal" evidence="2">
    <location>
        <begin position="90"/>
        <end position="206"/>
    </location>
</feature>
<feature type="binding site" evidence="1">
    <location>
        <begin position="9"/>
        <end position="10"/>
    </location>
    <ligand>
        <name>glutathione</name>
        <dbReference type="ChEBI" id="CHEBI:57925"/>
    </ligand>
</feature>
<feature type="binding site" evidence="1">
    <location>
        <begin position="43"/>
        <end position="46"/>
    </location>
    <ligand>
        <name>glutathione</name>
        <dbReference type="ChEBI" id="CHEBI:57925"/>
    </ligand>
</feature>
<feature type="binding site" evidence="1">
    <location>
        <position position="50"/>
    </location>
    <ligand>
        <name>glutathione</name>
        <dbReference type="ChEBI" id="CHEBI:57925"/>
    </ligand>
</feature>
<feature type="binding site" evidence="1">
    <location>
        <begin position="59"/>
        <end position="60"/>
    </location>
    <ligand>
        <name>glutathione</name>
        <dbReference type="ChEBI" id="CHEBI:57925"/>
    </ligand>
</feature>
<feature type="binding site" evidence="1">
    <location>
        <begin position="72"/>
        <end position="73"/>
    </location>
    <ligand>
        <name>glutathione</name>
        <dbReference type="ChEBI" id="CHEBI:57925"/>
    </ligand>
</feature>
<feature type="binding site" evidence="1">
    <location>
        <position position="116"/>
    </location>
    <ligand>
        <name>substrate</name>
    </ligand>
</feature>
<keyword id="KW-0020">Allergen</keyword>
<keyword id="KW-0903">Direct protein sequencing</keyword>
<keyword id="KW-0808">Transferase</keyword>